<reference key="1">
    <citation type="journal article" date="2000" name="Nature">
        <title>Sequence and analysis of chromosome 1 of the plant Arabidopsis thaliana.</title>
        <authorList>
            <person name="Theologis A."/>
            <person name="Ecker J.R."/>
            <person name="Palm C.J."/>
            <person name="Federspiel N.A."/>
            <person name="Kaul S."/>
            <person name="White O."/>
            <person name="Alonso J."/>
            <person name="Altafi H."/>
            <person name="Araujo R."/>
            <person name="Bowman C.L."/>
            <person name="Brooks S.Y."/>
            <person name="Buehler E."/>
            <person name="Chan A."/>
            <person name="Chao Q."/>
            <person name="Chen H."/>
            <person name="Cheuk R.F."/>
            <person name="Chin C.W."/>
            <person name="Chung M.K."/>
            <person name="Conn L."/>
            <person name="Conway A.B."/>
            <person name="Conway A.R."/>
            <person name="Creasy T.H."/>
            <person name="Dewar K."/>
            <person name="Dunn P."/>
            <person name="Etgu P."/>
            <person name="Feldblyum T.V."/>
            <person name="Feng J.-D."/>
            <person name="Fong B."/>
            <person name="Fujii C.Y."/>
            <person name="Gill J.E."/>
            <person name="Goldsmith A.D."/>
            <person name="Haas B."/>
            <person name="Hansen N.F."/>
            <person name="Hughes B."/>
            <person name="Huizar L."/>
            <person name="Hunter J.L."/>
            <person name="Jenkins J."/>
            <person name="Johnson-Hopson C."/>
            <person name="Khan S."/>
            <person name="Khaykin E."/>
            <person name="Kim C.J."/>
            <person name="Koo H.L."/>
            <person name="Kremenetskaia I."/>
            <person name="Kurtz D.B."/>
            <person name="Kwan A."/>
            <person name="Lam B."/>
            <person name="Langin-Hooper S."/>
            <person name="Lee A."/>
            <person name="Lee J.M."/>
            <person name="Lenz C.A."/>
            <person name="Li J.H."/>
            <person name="Li Y.-P."/>
            <person name="Lin X."/>
            <person name="Liu S.X."/>
            <person name="Liu Z.A."/>
            <person name="Luros J.S."/>
            <person name="Maiti R."/>
            <person name="Marziali A."/>
            <person name="Militscher J."/>
            <person name="Miranda M."/>
            <person name="Nguyen M."/>
            <person name="Nierman W.C."/>
            <person name="Osborne B.I."/>
            <person name="Pai G."/>
            <person name="Peterson J."/>
            <person name="Pham P.K."/>
            <person name="Rizzo M."/>
            <person name="Rooney T."/>
            <person name="Rowley D."/>
            <person name="Sakano H."/>
            <person name="Salzberg S.L."/>
            <person name="Schwartz J.R."/>
            <person name="Shinn P."/>
            <person name="Southwick A.M."/>
            <person name="Sun H."/>
            <person name="Tallon L.J."/>
            <person name="Tambunga G."/>
            <person name="Toriumi M.J."/>
            <person name="Town C.D."/>
            <person name="Utterback T."/>
            <person name="Van Aken S."/>
            <person name="Vaysberg M."/>
            <person name="Vysotskaia V.S."/>
            <person name="Walker M."/>
            <person name="Wu D."/>
            <person name="Yu G."/>
            <person name="Fraser C.M."/>
            <person name="Venter J.C."/>
            <person name="Davis R.W."/>
        </authorList>
    </citation>
    <scope>NUCLEOTIDE SEQUENCE [LARGE SCALE GENOMIC DNA]</scope>
    <source>
        <strain>cv. Columbia</strain>
    </source>
</reference>
<reference key="2">
    <citation type="journal article" date="2017" name="Plant J.">
        <title>Araport11: a complete reannotation of the Arabidopsis thaliana reference genome.</title>
        <authorList>
            <person name="Cheng C.Y."/>
            <person name="Krishnakumar V."/>
            <person name="Chan A.P."/>
            <person name="Thibaud-Nissen F."/>
            <person name="Schobel S."/>
            <person name="Town C.D."/>
        </authorList>
    </citation>
    <scope>GENOME REANNOTATION</scope>
    <source>
        <strain>cv. Columbia</strain>
    </source>
</reference>
<reference key="3">
    <citation type="journal article" date="2001" name="Plant Physiol.">
        <title>A large family of genes that share homology with CLAVATA3.</title>
        <authorList>
            <person name="Cock J.M."/>
            <person name="McCormick S."/>
        </authorList>
    </citation>
    <scope>GENE FAMILY</scope>
    <scope>NOMENCLATURE</scope>
</reference>
<reference key="4">
    <citation type="journal article" date="2003" name="Plant Mol. Biol.">
        <title>The Arabidopsis CLV3-like (CLE) genes are expressed in diverse tissues and encode secreted proteins.</title>
        <authorList>
            <person name="Sharma V.K."/>
            <person name="Ramirez J."/>
            <person name="Fletcher J.C."/>
        </authorList>
    </citation>
    <scope>TISSUE SPECIFICITY</scope>
</reference>
<reference key="5">
    <citation type="journal article" date="2006" name="Plant Physiol.">
        <title>Evidence for functional conservation, sufficiency, and proteolytic processing of the CLAVATA3 CLE domain.</title>
        <authorList>
            <person name="Ni J."/>
            <person name="Clark S.E."/>
        </authorList>
    </citation>
    <scope>FUNCTION</scope>
</reference>
<reference key="6">
    <citation type="journal article" date="2006" name="Plant Physiol.">
        <title>Gain-of-function phenotypes of many CLAVATA3/ESR genes, including four new family members, correlate with tandem variations in the conserved CLAVATA3/ESR domain.</title>
        <authorList>
            <person name="Strabala T.J."/>
            <person name="O'donnell P.J."/>
            <person name="Smit A.-M."/>
            <person name="Ampomah-Dwamena C."/>
            <person name="Martin E.J."/>
            <person name="Netzler N."/>
            <person name="Nieuwenhuizen N.J."/>
            <person name="Quinn B.D."/>
            <person name="Foote H.C.C."/>
            <person name="Hudson K.R."/>
        </authorList>
    </citation>
    <scope>GENE FAMILY</scope>
</reference>
<reference key="7">
    <citation type="journal article" date="2006" name="Science">
        <title>Dodeca-CLE peptides as suppressors of plant stem cell differentiation.</title>
        <authorList>
            <person name="Ito Y."/>
            <person name="Nakanomyo I."/>
            <person name="Motose H."/>
            <person name="Iwamoto K."/>
            <person name="Sawa S."/>
            <person name="Dohmae N."/>
            <person name="Fukuda H."/>
        </authorList>
    </citation>
    <scope>FUNCTION</scope>
</reference>
<reference key="8">
    <citation type="journal article" date="2008" name="Cell. Mol. Life Sci.">
        <title>The CLE family of plant polypeptide signaling molecules.</title>
        <authorList>
            <person name="Jun J.H."/>
            <person name="Fiume E."/>
            <person name="Fletcher J.C."/>
        </authorList>
    </citation>
    <scope>REVIEW</scope>
</reference>
<reference key="9">
    <citation type="journal article" date="2008" name="Curr. Opin. Plant Biol.">
        <title>Diverse and conserved roles of CLE peptides.</title>
        <authorList>
            <person name="Mitchum M.G."/>
            <person name="Wang X."/>
            <person name="Davis E.L."/>
        </authorList>
    </citation>
    <scope>REVIEW</scope>
</reference>
<reference key="10">
    <citation type="journal article" date="2010" name="Planta">
        <title>CLE14/CLE20 peptides may interact with CLAVATA2/CORYNE receptor-like kinases to irreversibly inhibit cell division in the root meristem of Arabidopsis.</title>
        <authorList>
            <person name="Meng L."/>
            <person name="Feldman L.J."/>
        </authorList>
    </citation>
    <scope>DEVELOPMENTAL STAGE</scope>
    <scope>FUNCTION</scope>
</reference>
<reference key="11">
    <citation type="journal article" date="2010" name="Protoplasma">
        <title>CLE peptide signaling during plant development.</title>
        <authorList>
            <person name="Wang G."/>
            <person name="Fiers M."/>
        </authorList>
    </citation>
    <scope>REVIEW</scope>
</reference>
<reference key="12">
    <citation type="journal article" date="2017" name="Dev. Cell">
        <title>Phosphate starvation-dependent iron mobilization induces CLE14 expression to trigger root meristem differentiation through CLV2/PEPR2 signaling.</title>
        <authorList>
            <person name="Gutierrez-Alanis D."/>
            <person name="Yong-Villalobos L."/>
            <person name="Jimenez-Sandoval P."/>
            <person name="Alatorre-Cobos F."/>
            <person name="Oropeza-Aburto A."/>
            <person name="Mora-Macias J."/>
            <person name="Sanchez-Rodriguez F."/>
            <person name="Cruz-Ramirez A."/>
            <person name="Herrera-Estrella L."/>
        </authorList>
    </citation>
    <scope>FUNCTION</scope>
    <scope>TISSUE SPECIFICITY</scope>
    <scope>INDUCTION</scope>
    <scope>INTERACTION WITH CLV2 AND PEPR2</scope>
</reference>
<reference key="13">
    <citation type="journal article" date="2017" name="EMBO Rep.">
        <title>Perception of root-active CLE peptides requires CORYNE function in the phloem vasculature.</title>
        <authorList>
            <person name="Hazak O."/>
            <person name="Brandt B."/>
            <person name="Cattaneo P."/>
            <person name="Santiago J."/>
            <person name="Rodriguez-Villalon A."/>
            <person name="Hothorn M."/>
            <person name="Hardtke C.S."/>
        </authorList>
    </citation>
    <scope>FUNCTION</scope>
    <source>
        <strain>cv. Columbia</strain>
    </source>
</reference>
<organism>
    <name type="scientific">Arabidopsis thaliana</name>
    <name type="common">Mouse-ear cress</name>
    <dbReference type="NCBI Taxonomy" id="3702"/>
    <lineage>
        <taxon>Eukaryota</taxon>
        <taxon>Viridiplantae</taxon>
        <taxon>Streptophyta</taxon>
        <taxon>Embryophyta</taxon>
        <taxon>Tracheophyta</taxon>
        <taxon>Spermatophyta</taxon>
        <taxon>Magnoliopsida</taxon>
        <taxon>eudicotyledons</taxon>
        <taxon>Gunneridae</taxon>
        <taxon>Pentapetalae</taxon>
        <taxon>rosids</taxon>
        <taxon>malvids</taxon>
        <taxon>Brassicales</taxon>
        <taxon>Brassicaceae</taxon>
        <taxon>Camelineae</taxon>
        <taxon>Arabidopsis</taxon>
    </lineage>
</organism>
<feature type="signal peptide" evidence="2">
    <location>
        <begin position="1"/>
        <end position="26"/>
    </location>
</feature>
<feature type="chain" id="PRO_0000401259" description="CLAVATA3/ESR (CLE)-related protein 14">
    <location>
        <begin position="27"/>
        <end position="80"/>
    </location>
</feature>
<feature type="peptide" id="PRO_0000401260" description="CLE14p" evidence="1">
    <location>
        <begin position="68"/>
        <end position="79"/>
    </location>
</feature>
<feature type="modified residue" description="Hydroxyproline" evidence="1">
    <location>
        <position position="71"/>
    </location>
</feature>
<feature type="modified residue" description="Hydroxyproline" evidence="1">
    <location>
        <position position="74"/>
    </location>
</feature>
<feature type="glycosylation site" description="O-linked (Ara...) hydroxyproline" evidence="1">
    <location>
        <position position="74"/>
    </location>
</feature>
<dbReference type="EMBL" id="AC022355">
    <property type="status" value="NOT_ANNOTATED_CDS"/>
    <property type="molecule type" value="Genomic_DNA"/>
</dbReference>
<dbReference type="EMBL" id="CP002684">
    <property type="protein sequence ID" value="AEE34075.1"/>
    <property type="molecule type" value="Genomic_DNA"/>
</dbReference>
<dbReference type="RefSeq" id="NP_001319300.1">
    <property type="nucleotide sequence ID" value="NM_001334074.1"/>
</dbReference>
<dbReference type="STRING" id="3702.Q3ECJ5"/>
<dbReference type="GlyCosmos" id="Q3ECJ5">
    <property type="glycosylation" value="1 site, No reported glycans"/>
</dbReference>
<dbReference type="PaxDb" id="3702-AT1G63245.1"/>
<dbReference type="EnsemblPlants" id="AT1G63245.1">
    <property type="protein sequence ID" value="AT1G63245.1"/>
    <property type="gene ID" value="AT1G63245"/>
</dbReference>
<dbReference type="GeneID" id="28717391"/>
<dbReference type="Gramene" id="AT1G63245.1">
    <property type="protein sequence ID" value="AT1G63245.1"/>
    <property type="gene ID" value="AT1G63245"/>
</dbReference>
<dbReference type="KEGG" id="ath:AT1G63245"/>
<dbReference type="Araport" id="AT1G63245"/>
<dbReference type="TAIR" id="AT1G63245">
    <property type="gene designation" value="CLE14"/>
</dbReference>
<dbReference type="HOGENOM" id="CLU_172158_0_0_1"/>
<dbReference type="InParanoid" id="Q3ECJ5"/>
<dbReference type="OMA" id="PNIMTAT"/>
<dbReference type="OrthoDB" id="663321at2759"/>
<dbReference type="PhylomeDB" id="Q3ECJ5"/>
<dbReference type="PRO" id="PR:Q3ECJ5"/>
<dbReference type="Proteomes" id="UP000006548">
    <property type="component" value="Chromosome 1"/>
</dbReference>
<dbReference type="ExpressionAtlas" id="Q3ECJ5">
    <property type="expression patterns" value="baseline and differential"/>
</dbReference>
<dbReference type="GO" id="GO:0048046">
    <property type="term" value="C:apoplast"/>
    <property type="evidence" value="ECO:0000250"/>
    <property type="project" value="UniProtKB"/>
</dbReference>
<dbReference type="GO" id="GO:0033612">
    <property type="term" value="F:receptor serine/threonine kinase binding"/>
    <property type="evidence" value="ECO:0000353"/>
    <property type="project" value="UniProtKB"/>
</dbReference>
<dbReference type="GO" id="GO:0005102">
    <property type="term" value="F:signaling receptor binding"/>
    <property type="evidence" value="ECO:0000353"/>
    <property type="project" value="UniProtKB"/>
</dbReference>
<dbReference type="GO" id="GO:0045168">
    <property type="term" value="P:cell-cell signaling involved in cell fate commitment"/>
    <property type="evidence" value="ECO:0000250"/>
    <property type="project" value="UniProtKB"/>
</dbReference>
<dbReference type="GO" id="GO:0016036">
    <property type="term" value="P:cellular response to phosphate starvation"/>
    <property type="evidence" value="ECO:0000314"/>
    <property type="project" value="UniProtKB"/>
</dbReference>
<dbReference type="GO" id="GO:0010078">
    <property type="term" value="P:maintenance of root meristem identity"/>
    <property type="evidence" value="ECO:0000314"/>
    <property type="project" value="UniProtKB"/>
</dbReference>
<dbReference type="GO" id="GO:0010088">
    <property type="term" value="P:phloem development"/>
    <property type="evidence" value="ECO:0000314"/>
    <property type="project" value="UniProtKB"/>
</dbReference>
<dbReference type="GO" id="GO:0045595">
    <property type="term" value="P:regulation of cell differentiation"/>
    <property type="evidence" value="ECO:0000314"/>
    <property type="project" value="UniProtKB"/>
</dbReference>
<dbReference type="GO" id="GO:1900055">
    <property type="term" value="P:regulation of leaf senescence"/>
    <property type="evidence" value="ECO:0000315"/>
    <property type="project" value="TAIR"/>
</dbReference>
<dbReference type="GO" id="GO:2000377">
    <property type="term" value="P:regulation of reactive oxygen species metabolic process"/>
    <property type="evidence" value="ECO:0000316"/>
    <property type="project" value="TAIR"/>
</dbReference>
<dbReference type="InterPro" id="IPR055317">
    <property type="entry name" value="CLE14-like"/>
</dbReference>
<dbReference type="PANTHER" id="PTHR35472">
    <property type="match status" value="1"/>
</dbReference>
<dbReference type="PANTHER" id="PTHR35472:SF4">
    <property type="entry name" value="DUF19 DOMAIN-CONTAINING PROTEIN"/>
    <property type="match status" value="1"/>
</dbReference>
<name>CLE14_ARATH</name>
<keyword id="KW-0217">Developmental protein</keyword>
<keyword id="KW-0221">Differentiation</keyword>
<keyword id="KW-0325">Glycoprotein</keyword>
<keyword id="KW-0379">Hydroxylation</keyword>
<keyword id="KW-1185">Reference proteome</keyword>
<keyword id="KW-0964">Secreted</keyword>
<keyword id="KW-0732">Signal</keyword>
<sequence length="80" mass="9037">MKVWSQRLSFLIVMIFILAGLHSSSAGRKLPSMTTTEEFQRLSFDGKRILSEVTADKKYDRIYGASARLVPKGPNPLHNK</sequence>
<accession>Q3ECJ5</accession>
<evidence type="ECO:0000250" key="1">
    <source>
        <dbReference type="UniProtKB" id="O49519"/>
    </source>
</evidence>
<evidence type="ECO:0000255" key="2"/>
<evidence type="ECO:0000269" key="3">
    <source>
    </source>
</evidence>
<evidence type="ECO:0000269" key="4">
    <source>
    </source>
</evidence>
<evidence type="ECO:0000269" key="5">
    <source>
    </source>
</evidence>
<evidence type="ECO:0000269" key="6">
    <source>
    </source>
</evidence>
<evidence type="ECO:0000269" key="7">
    <source>
    </source>
</evidence>
<evidence type="ECO:0000269" key="8">
    <source>
    </source>
</evidence>
<evidence type="ECO:0000303" key="9">
    <source>
    </source>
</evidence>
<evidence type="ECO:0000303" key="10">
    <source>
    </source>
</evidence>
<evidence type="ECO:0000305" key="11"/>
<evidence type="ECO:0000312" key="12">
    <source>
        <dbReference type="Araport" id="AT1G63245"/>
    </source>
</evidence>
<evidence type="ECO:0000312" key="13">
    <source>
        <dbReference type="EMBL" id="AC022355"/>
    </source>
</evidence>
<protein>
    <recommendedName>
        <fullName evidence="9">CLAVATA3/ESR (CLE)-related protein 14</fullName>
    </recommendedName>
    <component>
        <recommendedName>
            <fullName evidence="9">CLE14p</fullName>
        </recommendedName>
    </component>
</protein>
<comment type="function">
    <molecule>CLE14p</molecule>
    <text evidence="4 5 6 7 8">Extracellular signal peptide that regulates cell fate. Represses root apical meristem maintenance. Acts as an elicitor of the root meristem differentiation through the CLV2/CRN complex signaling pathway (PubMed:20697738, PubMed:28586647). Inhibits irreversibly root growth by reducing cell division rates in the root apical meristem (PubMed:20697738, PubMed:28586647). Regulates the transition of protophloem cells from proliferation to differentiation, thus impinging on postembryonic growth capacity of the root meristem; this signaling pathway requires CRN and CLV2 (PubMed:28607033).</text>
</comment>
<comment type="subunit">
    <molecule>CLE14p</molecule>
    <text evidence="10">Interacts with the extracellular leucine-rich repeat region of CLV2 and PEPR2.</text>
</comment>
<comment type="subcellular location">
    <molecule>CLE14p</molecule>
    <subcellularLocation>
        <location evidence="1">Secreted</location>
        <location evidence="1">Extracellular space</location>
    </subcellularLocation>
</comment>
<comment type="tissue specificity">
    <molecule>CLE14p</molecule>
    <text evidence="3 7">Mostly expressed in roots, and, to a lower extent, in seedlings and leaves (PubMed:12602871). Expressed in the primary root tip under Pi deficiency (PubMed:28586647).</text>
</comment>
<comment type="developmental stage">
    <molecule>CLE14p</molecule>
    <text evidence="6">Expressed specifically in differentiating cells of the root.</text>
</comment>
<comment type="induction">
    <molecule>CLE14p</molecule>
    <text evidence="7">Induced by Pi starvation.</text>
</comment>
<comment type="PTM">
    <molecule>CLE14p</molecule>
    <text evidence="1">The O-glycosylation (arabinosylation) of the hydroxyproline Pro-74 enhances binding affinity of the CLE14p peptide for its receptor.</text>
</comment>
<comment type="similarity">
    <text evidence="11">Belongs to the CLV3/ESR signal peptide family.</text>
</comment>
<proteinExistence type="evidence at protein level"/>
<gene>
    <name evidence="9" type="primary">CLE14</name>
    <name evidence="12" type="ordered locus">At1g63245</name>
    <name evidence="13" type="ORF">F9N12</name>
</gene>